<reference key="1">
    <citation type="journal article" date="2008" name="PLoS Genet.">
        <title>Complete genome sequence of the N2-fixing broad host range endophyte Klebsiella pneumoniae 342 and virulence predictions verified in mice.</title>
        <authorList>
            <person name="Fouts D.E."/>
            <person name="Tyler H.L."/>
            <person name="DeBoy R.T."/>
            <person name="Daugherty S."/>
            <person name="Ren Q."/>
            <person name="Badger J.H."/>
            <person name="Durkin A.S."/>
            <person name="Huot H."/>
            <person name="Shrivastava S."/>
            <person name="Kothari S."/>
            <person name="Dodson R.J."/>
            <person name="Mohamoud Y."/>
            <person name="Khouri H."/>
            <person name="Roesch L.F.W."/>
            <person name="Krogfelt K.A."/>
            <person name="Struve C."/>
            <person name="Triplett E.W."/>
            <person name="Methe B.A."/>
        </authorList>
    </citation>
    <scope>NUCLEOTIDE SEQUENCE [LARGE SCALE GENOMIC DNA]</scope>
    <source>
        <strain>342</strain>
    </source>
</reference>
<sequence length="569" mass="61603">MAIAIGLDFGSDSVRALAVECASGAELAASVEWYPRWREGQYCDGANNRFRHHPRDYIESMEAALKSVLASLSAEQRADVVGIGVDSTGSTPAPVDAEGNVLALREEFADNPNAMFVLWKDHTAVEEAEAITRLCHQPGKEDYSRYIGGIYSSEWFWAKILHVTREDSAVAQAAASWVELCDWVPALLSGTTRPQDLRRGRCSAGHKSLWHESWGGLPPASFFDELDPIINQHLAWPLFTDTWTADVPVGTLSAEWAQRLGLSQTVAISGGAFDCHMGAVGAGAQPNALVKVIGTSTCDILIADKESVGERTVKGICGQVDGSVVPHFIGMEAGQSAFGDIYAWFGRILGWPLEQLAQQQPALREQIKASQKQLLPALTEAWANNPSLDHLPVVLDWFNGRRTPNANQRLKGVITDLNLATDAPALFGGLIAATAFGARAIMECFTEQGIPVNNVMALGGIARKNQVIMQACCDVLNRPLQIVASDQCCALGAAIFAAVAAGVYDDIPAAQQRMASQVETTLQPRPAQAQRFEQLYQRYQQWSISAEQHYLPSAAKAEKAPQSQAALTH</sequence>
<proteinExistence type="inferred from homology"/>
<dbReference type="EC" id="2.7.1.16" evidence="1"/>
<dbReference type="EMBL" id="CP000964">
    <property type="protein sequence ID" value="ACI10011.1"/>
    <property type="molecule type" value="Genomic_DNA"/>
</dbReference>
<dbReference type="SMR" id="B5Y1Y0"/>
<dbReference type="KEGG" id="kpe:KPK_4680"/>
<dbReference type="HOGENOM" id="CLU_009281_9_1_6"/>
<dbReference type="UniPathway" id="UPA00145">
    <property type="reaction ID" value="UER00566"/>
</dbReference>
<dbReference type="Proteomes" id="UP000001734">
    <property type="component" value="Chromosome"/>
</dbReference>
<dbReference type="GO" id="GO:0005737">
    <property type="term" value="C:cytoplasm"/>
    <property type="evidence" value="ECO:0007669"/>
    <property type="project" value="TreeGrafter"/>
</dbReference>
<dbReference type="GO" id="GO:0005524">
    <property type="term" value="F:ATP binding"/>
    <property type="evidence" value="ECO:0007669"/>
    <property type="project" value="UniProtKB-KW"/>
</dbReference>
<dbReference type="GO" id="GO:0019150">
    <property type="term" value="F:D-ribulokinase activity"/>
    <property type="evidence" value="ECO:0007669"/>
    <property type="project" value="RHEA"/>
</dbReference>
<dbReference type="GO" id="GO:0008741">
    <property type="term" value="F:ribulokinase activity"/>
    <property type="evidence" value="ECO:0007669"/>
    <property type="project" value="UniProtKB-UniRule"/>
</dbReference>
<dbReference type="GO" id="GO:0019569">
    <property type="term" value="P:L-arabinose catabolic process to xylulose 5-phosphate"/>
    <property type="evidence" value="ECO:0007669"/>
    <property type="project" value="UniProtKB-UniRule"/>
</dbReference>
<dbReference type="CDD" id="cd07781">
    <property type="entry name" value="ASKHA_NBD_FGGY_L-RBK"/>
    <property type="match status" value="1"/>
</dbReference>
<dbReference type="Gene3D" id="1.20.58.2240">
    <property type="match status" value="1"/>
</dbReference>
<dbReference type="Gene3D" id="3.30.420.40">
    <property type="match status" value="1"/>
</dbReference>
<dbReference type="HAMAP" id="MF_00520">
    <property type="entry name" value="Ribulokinase"/>
    <property type="match status" value="1"/>
</dbReference>
<dbReference type="InterPro" id="IPR043129">
    <property type="entry name" value="ATPase_NBD"/>
</dbReference>
<dbReference type="InterPro" id="IPR018485">
    <property type="entry name" value="FGGY_C"/>
</dbReference>
<dbReference type="InterPro" id="IPR005929">
    <property type="entry name" value="Ribulokinase"/>
</dbReference>
<dbReference type="NCBIfam" id="TIGR01234">
    <property type="entry name" value="L-ribulokinase"/>
    <property type="match status" value="1"/>
</dbReference>
<dbReference type="NCBIfam" id="NF003154">
    <property type="entry name" value="PRK04123.1"/>
    <property type="match status" value="1"/>
</dbReference>
<dbReference type="PANTHER" id="PTHR43435:SF4">
    <property type="entry name" value="FGGY CARBOHYDRATE KINASE DOMAIN-CONTAINING PROTEIN"/>
    <property type="match status" value="1"/>
</dbReference>
<dbReference type="PANTHER" id="PTHR43435">
    <property type="entry name" value="RIBULOKINASE"/>
    <property type="match status" value="1"/>
</dbReference>
<dbReference type="Pfam" id="PF02782">
    <property type="entry name" value="FGGY_C"/>
    <property type="match status" value="1"/>
</dbReference>
<dbReference type="SUPFAM" id="SSF53067">
    <property type="entry name" value="Actin-like ATPase domain"/>
    <property type="match status" value="2"/>
</dbReference>
<comment type="catalytic activity">
    <reaction evidence="1">
        <text>D-ribulose + ATP = D-ribulose 5-phosphate + ADP + H(+)</text>
        <dbReference type="Rhea" id="RHEA:17601"/>
        <dbReference type="ChEBI" id="CHEBI:15378"/>
        <dbReference type="ChEBI" id="CHEBI:17173"/>
        <dbReference type="ChEBI" id="CHEBI:30616"/>
        <dbReference type="ChEBI" id="CHEBI:58121"/>
        <dbReference type="ChEBI" id="CHEBI:456216"/>
        <dbReference type="EC" id="2.7.1.16"/>
    </reaction>
</comment>
<comment type="catalytic activity">
    <reaction evidence="1">
        <text>L-ribulose + ATP = L-ribulose 5-phosphate + ADP + H(+)</text>
        <dbReference type="Rhea" id="RHEA:22072"/>
        <dbReference type="ChEBI" id="CHEBI:15378"/>
        <dbReference type="ChEBI" id="CHEBI:16880"/>
        <dbReference type="ChEBI" id="CHEBI:30616"/>
        <dbReference type="ChEBI" id="CHEBI:58226"/>
        <dbReference type="ChEBI" id="CHEBI:456216"/>
        <dbReference type="EC" id="2.7.1.16"/>
    </reaction>
</comment>
<comment type="pathway">
    <text evidence="1">Carbohydrate degradation; L-arabinose degradation via L-ribulose; D-xylulose 5-phosphate from L-arabinose (bacterial route): step 2/3.</text>
</comment>
<comment type="similarity">
    <text evidence="1">Belongs to the ribulokinase family.</text>
</comment>
<gene>
    <name evidence="1" type="primary">araB</name>
    <name type="ordered locus">KPK_4680</name>
</gene>
<keyword id="KW-0054">Arabinose catabolism</keyword>
<keyword id="KW-0067">ATP-binding</keyword>
<keyword id="KW-0119">Carbohydrate metabolism</keyword>
<keyword id="KW-0418">Kinase</keyword>
<keyword id="KW-0547">Nucleotide-binding</keyword>
<keyword id="KW-0808">Transferase</keyword>
<feature type="chain" id="PRO_1000127635" description="Ribulokinase">
    <location>
        <begin position="1"/>
        <end position="569"/>
    </location>
</feature>
<accession>B5Y1Y0</accession>
<protein>
    <recommendedName>
        <fullName evidence="1">Ribulokinase</fullName>
        <ecNumber evidence="1">2.7.1.16</ecNumber>
    </recommendedName>
</protein>
<organism>
    <name type="scientific">Klebsiella pneumoniae (strain 342)</name>
    <dbReference type="NCBI Taxonomy" id="507522"/>
    <lineage>
        <taxon>Bacteria</taxon>
        <taxon>Pseudomonadati</taxon>
        <taxon>Pseudomonadota</taxon>
        <taxon>Gammaproteobacteria</taxon>
        <taxon>Enterobacterales</taxon>
        <taxon>Enterobacteriaceae</taxon>
        <taxon>Klebsiella/Raoultella group</taxon>
        <taxon>Klebsiella</taxon>
        <taxon>Klebsiella pneumoniae complex</taxon>
    </lineage>
</organism>
<evidence type="ECO:0000255" key="1">
    <source>
        <dbReference type="HAMAP-Rule" id="MF_00520"/>
    </source>
</evidence>
<name>ARAB_KLEP3</name>